<organism>
    <name type="scientific">Shigella dysenteriae serotype 1 (strain Sd197)</name>
    <dbReference type="NCBI Taxonomy" id="300267"/>
    <lineage>
        <taxon>Bacteria</taxon>
        <taxon>Pseudomonadati</taxon>
        <taxon>Pseudomonadota</taxon>
        <taxon>Gammaproteobacteria</taxon>
        <taxon>Enterobacterales</taxon>
        <taxon>Enterobacteriaceae</taxon>
        <taxon>Shigella</taxon>
    </lineage>
</organism>
<protein>
    <recommendedName>
        <fullName evidence="1">Outer membrane protein assembly factor BamE</fullName>
    </recommendedName>
</protein>
<sequence length="113" mass="12302">MRCKTLTAAAAVLLMLTAGCSTLERVVYRPDINQGNYLTANDVSKIRVGMTQQQVAYALGTPLMSDPFGTNTWFYVFRQQPGHEGVTQQTLTLTFNSSGVLTNIDNKPALSGN</sequence>
<comment type="function">
    <text evidence="1">Part of the outer membrane protein assembly complex, which is involved in assembly and insertion of beta-barrel proteins into the outer membrane.</text>
</comment>
<comment type="subunit">
    <text evidence="1">Part of the Bam complex, which is composed of the outer membrane protein BamA, and four lipoproteins BamB, BamC, BamD and BamE.</text>
</comment>
<comment type="subcellular location">
    <subcellularLocation>
        <location evidence="1">Cell outer membrane</location>
        <topology evidence="1">Lipid-anchor</topology>
    </subcellularLocation>
</comment>
<comment type="similarity">
    <text evidence="1">Belongs to the BamE family.</text>
</comment>
<comment type="sequence caution" evidence="2">
    <conflict type="erroneous initiation">
        <sequence resource="EMBL-CDS" id="ABB62833"/>
    </conflict>
    <text>Truncated N-terminus.</text>
</comment>
<reference key="1">
    <citation type="journal article" date="2005" name="Nucleic Acids Res.">
        <title>Genome dynamics and diversity of Shigella species, the etiologic agents of bacillary dysentery.</title>
        <authorList>
            <person name="Yang F."/>
            <person name="Yang J."/>
            <person name="Zhang X."/>
            <person name="Chen L."/>
            <person name="Jiang Y."/>
            <person name="Yan Y."/>
            <person name="Tang X."/>
            <person name="Wang J."/>
            <person name="Xiong Z."/>
            <person name="Dong J."/>
            <person name="Xue Y."/>
            <person name="Zhu Y."/>
            <person name="Xu X."/>
            <person name="Sun L."/>
            <person name="Chen S."/>
            <person name="Nie H."/>
            <person name="Peng J."/>
            <person name="Xu J."/>
            <person name="Wang Y."/>
            <person name="Yuan Z."/>
            <person name="Wen Y."/>
            <person name="Yao Z."/>
            <person name="Shen Y."/>
            <person name="Qiang B."/>
            <person name="Hou Y."/>
            <person name="Yu J."/>
            <person name="Jin Q."/>
        </authorList>
    </citation>
    <scope>NUCLEOTIDE SEQUENCE [LARGE SCALE GENOMIC DNA]</scope>
    <source>
        <strain>Sd197</strain>
    </source>
</reference>
<dbReference type="EMBL" id="CP000034">
    <property type="protein sequence ID" value="ABB62833.1"/>
    <property type="status" value="ALT_INIT"/>
    <property type="molecule type" value="Genomic_DNA"/>
</dbReference>
<dbReference type="RefSeq" id="WP_001203437.1">
    <property type="nucleotide sequence ID" value="NC_007606.1"/>
</dbReference>
<dbReference type="RefSeq" id="YP_404324.2">
    <property type="nucleotide sequence ID" value="NC_007606.1"/>
</dbReference>
<dbReference type="BMRB" id="Q32CX2"/>
<dbReference type="SMR" id="Q32CX2"/>
<dbReference type="STRING" id="300267.SDY_2790"/>
<dbReference type="EnsemblBacteria" id="ABB62833">
    <property type="protein sequence ID" value="ABB62833"/>
    <property type="gene ID" value="SDY_2790"/>
</dbReference>
<dbReference type="GeneID" id="93774466"/>
<dbReference type="KEGG" id="sdy:SDY_2790"/>
<dbReference type="PATRIC" id="fig|300267.13.peg.3362"/>
<dbReference type="HOGENOM" id="CLU_083835_4_2_6"/>
<dbReference type="Proteomes" id="UP000002716">
    <property type="component" value="Chromosome"/>
</dbReference>
<dbReference type="GO" id="GO:1990063">
    <property type="term" value="C:Bam protein complex"/>
    <property type="evidence" value="ECO:0007669"/>
    <property type="project" value="TreeGrafter"/>
</dbReference>
<dbReference type="GO" id="GO:0030674">
    <property type="term" value="F:protein-macromolecule adaptor activity"/>
    <property type="evidence" value="ECO:0007669"/>
    <property type="project" value="TreeGrafter"/>
</dbReference>
<dbReference type="GO" id="GO:0043165">
    <property type="term" value="P:Gram-negative-bacterium-type cell outer membrane assembly"/>
    <property type="evidence" value="ECO:0007669"/>
    <property type="project" value="UniProtKB-UniRule"/>
</dbReference>
<dbReference type="GO" id="GO:0051205">
    <property type="term" value="P:protein insertion into membrane"/>
    <property type="evidence" value="ECO:0007669"/>
    <property type="project" value="UniProtKB-UniRule"/>
</dbReference>
<dbReference type="FunFam" id="3.30.1450.10:FF:000001">
    <property type="entry name" value="Outer membrane protein assembly factor BamE"/>
    <property type="match status" value="1"/>
</dbReference>
<dbReference type="Gene3D" id="3.30.1450.10">
    <property type="match status" value="1"/>
</dbReference>
<dbReference type="HAMAP" id="MF_00925">
    <property type="entry name" value="OM_assembly_BamE"/>
    <property type="match status" value="1"/>
</dbReference>
<dbReference type="InterPro" id="IPR026592">
    <property type="entry name" value="BamE"/>
</dbReference>
<dbReference type="InterPro" id="IPR037873">
    <property type="entry name" value="BamE-like"/>
</dbReference>
<dbReference type="InterPro" id="IPR007450">
    <property type="entry name" value="BamE_dom"/>
</dbReference>
<dbReference type="NCBIfam" id="NF008585">
    <property type="entry name" value="PRK11548.1"/>
    <property type="match status" value="1"/>
</dbReference>
<dbReference type="PANTHER" id="PTHR37482">
    <property type="entry name" value="OUTER MEMBRANE PROTEIN ASSEMBLY FACTOR BAME"/>
    <property type="match status" value="1"/>
</dbReference>
<dbReference type="PANTHER" id="PTHR37482:SF1">
    <property type="entry name" value="OUTER MEMBRANE PROTEIN ASSEMBLY FACTOR BAME"/>
    <property type="match status" value="1"/>
</dbReference>
<dbReference type="Pfam" id="PF04355">
    <property type="entry name" value="BamE"/>
    <property type="match status" value="1"/>
</dbReference>
<dbReference type="PROSITE" id="PS51257">
    <property type="entry name" value="PROKAR_LIPOPROTEIN"/>
    <property type="match status" value="1"/>
</dbReference>
<accession>Q32CX2</accession>
<name>BAME_SHIDS</name>
<evidence type="ECO:0000255" key="1">
    <source>
        <dbReference type="HAMAP-Rule" id="MF_00925"/>
    </source>
</evidence>
<evidence type="ECO:0000305" key="2"/>
<proteinExistence type="inferred from homology"/>
<gene>
    <name evidence="1" type="primary">bamE</name>
    <name type="synonym">smpA</name>
    <name type="ordered locus">SDY_2790</name>
</gene>
<keyword id="KW-0998">Cell outer membrane</keyword>
<keyword id="KW-0449">Lipoprotein</keyword>
<keyword id="KW-0472">Membrane</keyword>
<keyword id="KW-0564">Palmitate</keyword>
<keyword id="KW-1185">Reference proteome</keyword>
<keyword id="KW-0732">Signal</keyword>
<feature type="signal peptide" evidence="1">
    <location>
        <begin position="1"/>
        <end position="19"/>
    </location>
</feature>
<feature type="chain" id="PRO_0000417870" description="Outer membrane protein assembly factor BamE">
    <location>
        <begin position="20"/>
        <end position="113"/>
    </location>
</feature>
<feature type="lipid moiety-binding region" description="N-palmitoyl cysteine" evidence="1">
    <location>
        <position position="20"/>
    </location>
</feature>
<feature type="lipid moiety-binding region" description="S-diacylglycerol cysteine" evidence="1">
    <location>
        <position position="20"/>
    </location>
</feature>